<comment type="function">
    <text evidence="1">Located on the platform of the 30S subunit, it bridges several disparate RNA helices of the 16S rRNA. Forms part of the Shine-Dalgarno cleft in the 70S ribosome.</text>
</comment>
<comment type="subunit">
    <text evidence="1">Part of the 30S ribosomal subunit. Interacts with proteins S7 and S18. Binds to IF-3.</text>
</comment>
<comment type="similarity">
    <text evidence="1">Belongs to the universal ribosomal protein uS11 family.</text>
</comment>
<organism>
    <name type="scientific">Staphylococcus aureus (strain Mu3 / ATCC 700698)</name>
    <dbReference type="NCBI Taxonomy" id="418127"/>
    <lineage>
        <taxon>Bacteria</taxon>
        <taxon>Bacillati</taxon>
        <taxon>Bacillota</taxon>
        <taxon>Bacilli</taxon>
        <taxon>Bacillales</taxon>
        <taxon>Staphylococcaceae</taxon>
        <taxon>Staphylococcus</taxon>
    </lineage>
</organism>
<sequence>MARKQVSRKRRVKKNIENGVAHIRSTFNNTIVTITDEFGNALSWSSAGALGFKGSKKSTPFAAQMASETASKSAMEHGLKTVEVTVKGPGPGRESAIRALQSAGLEVTAIRDVTPVPHNGCRPPKRRRV</sequence>
<reference key="1">
    <citation type="journal article" date="2008" name="Antimicrob. Agents Chemother.">
        <title>Mutated response regulator graR is responsible for phenotypic conversion of Staphylococcus aureus from heterogeneous vancomycin-intermediate resistance to vancomycin-intermediate resistance.</title>
        <authorList>
            <person name="Neoh H.-M."/>
            <person name="Cui L."/>
            <person name="Yuzawa H."/>
            <person name="Takeuchi F."/>
            <person name="Matsuo M."/>
            <person name="Hiramatsu K."/>
        </authorList>
    </citation>
    <scope>NUCLEOTIDE SEQUENCE [LARGE SCALE GENOMIC DNA]</scope>
    <source>
        <strain>Mu3 / ATCC 700698</strain>
    </source>
</reference>
<accession>A7X5C5</accession>
<protein>
    <recommendedName>
        <fullName evidence="1">Small ribosomal subunit protein uS11</fullName>
    </recommendedName>
    <alternativeName>
        <fullName evidence="2">30S ribosomal protein S11</fullName>
    </alternativeName>
</protein>
<name>RS11_STAA1</name>
<keyword id="KW-0687">Ribonucleoprotein</keyword>
<keyword id="KW-0689">Ribosomal protein</keyword>
<keyword id="KW-0694">RNA-binding</keyword>
<keyword id="KW-0699">rRNA-binding</keyword>
<dbReference type="EMBL" id="AP009324">
    <property type="protein sequence ID" value="BAF79092.1"/>
    <property type="molecule type" value="Genomic_DNA"/>
</dbReference>
<dbReference type="RefSeq" id="WP_000101625.1">
    <property type="nucleotide sequence ID" value="NZ_CTYB01000025.1"/>
</dbReference>
<dbReference type="SMR" id="A7X5C5"/>
<dbReference type="GeneID" id="98346537"/>
<dbReference type="KEGG" id="saw:SAHV_2209"/>
<dbReference type="HOGENOM" id="CLU_072439_5_0_9"/>
<dbReference type="GO" id="GO:1990904">
    <property type="term" value="C:ribonucleoprotein complex"/>
    <property type="evidence" value="ECO:0007669"/>
    <property type="project" value="UniProtKB-KW"/>
</dbReference>
<dbReference type="GO" id="GO:0005840">
    <property type="term" value="C:ribosome"/>
    <property type="evidence" value="ECO:0007669"/>
    <property type="project" value="UniProtKB-KW"/>
</dbReference>
<dbReference type="GO" id="GO:0019843">
    <property type="term" value="F:rRNA binding"/>
    <property type="evidence" value="ECO:0007669"/>
    <property type="project" value="UniProtKB-UniRule"/>
</dbReference>
<dbReference type="GO" id="GO:0003735">
    <property type="term" value="F:structural constituent of ribosome"/>
    <property type="evidence" value="ECO:0007669"/>
    <property type="project" value="InterPro"/>
</dbReference>
<dbReference type="GO" id="GO:0006412">
    <property type="term" value="P:translation"/>
    <property type="evidence" value="ECO:0007669"/>
    <property type="project" value="UniProtKB-UniRule"/>
</dbReference>
<dbReference type="FunFam" id="3.30.420.80:FF:000001">
    <property type="entry name" value="30S ribosomal protein S11"/>
    <property type="match status" value="1"/>
</dbReference>
<dbReference type="Gene3D" id="3.30.420.80">
    <property type="entry name" value="Ribosomal protein S11"/>
    <property type="match status" value="1"/>
</dbReference>
<dbReference type="HAMAP" id="MF_01310">
    <property type="entry name" value="Ribosomal_uS11"/>
    <property type="match status" value="1"/>
</dbReference>
<dbReference type="InterPro" id="IPR001971">
    <property type="entry name" value="Ribosomal_uS11"/>
</dbReference>
<dbReference type="InterPro" id="IPR019981">
    <property type="entry name" value="Ribosomal_uS11_bac-type"/>
</dbReference>
<dbReference type="InterPro" id="IPR018102">
    <property type="entry name" value="Ribosomal_uS11_CS"/>
</dbReference>
<dbReference type="InterPro" id="IPR036967">
    <property type="entry name" value="Ribosomal_uS11_sf"/>
</dbReference>
<dbReference type="NCBIfam" id="NF003698">
    <property type="entry name" value="PRK05309.1"/>
    <property type="match status" value="1"/>
</dbReference>
<dbReference type="NCBIfam" id="TIGR03632">
    <property type="entry name" value="uS11_bact"/>
    <property type="match status" value="1"/>
</dbReference>
<dbReference type="PANTHER" id="PTHR11759">
    <property type="entry name" value="40S RIBOSOMAL PROTEIN S14/30S RIBOSOMAL PROTEIN S11"/>
    <property type="match status" value="1"/>
</dbReference>
<dbReference type="Pfam" id="PF00411">
    <property type="entry name" value="Ribosomal_S11"/>
    <property type="match status" value="1"/>
</dbReference>
<dbReference type="PIRSF" id="PIRSF002131">
    <property type="entry name" value="Ribosomal_S11"/>
    <property type="match status" value="1"/>
</dbReference>
<dbReference type="SUPFAM" id="SSF53137">
    <property type="entry name" value="Translational machinery components"/>
    <property type="match status" value="1"/>
</dbReference>
<dbReference type="PROSITE" id="PS00054">
    <property type="entry name" value="RIBOSOMAL_S11"/>
    <property type="match status" value="1"/>
</dbReference>
<evidence type="ECO:0000255" key="1">
    <source>
        <dbReference type="HAMAP-Rule" id="MF_01310"/>
    </source>
</evidence>
<evidence type="ECO:0000305" key="2"/>
<proteinExistence type="inferred from homology"/>
<gene>
    <name evidence="1" type="primary">rpsK</name>
    <name type="ordered locus">SAHV_2209</name>
</gene>
<feature type="chain" id="PRO_1000051858" description="Small ribosomal subunit protein uS11">
    <location>
        <begin position="1"/>
        <end position="129"/>
    </location>
</feature>